<organism>
    <name type="scientific">Gloeothece citriformis (strain PCC 7424)</name>
    <name type="common">Cyanothece sp. (strain PCC 7424)</name>
    <dbReference type="NCBI Taxonomy" id="65393"/>
    <lineage>
        <taxon>Bacteria</taxon>
        <taxon>Bacillati</taxon>
        <taxon>Cyanobacteriota</taxon>
        <taxon>Cyanophyceae</taxon>
        <taxon>Oscillatoriophycideae</taxon>
        <taxon>Chroococcales</taxon>
        <taxon>Aphanothecaceae</taxon>
        <taxon>Gloeothece</taxon>
        <taxon>Gloeothece citriformis</taxon>
    </lineage>
</organism>
<protein>
    <recommendedName>
        <fullName evidence="1">ATP synthase subunit beta</fullName>
        <ecNumber evidence="1">7.1.2.2</ecNumber>
    </recommendedName>
    <alternativeName>
        <fullName evidence="1">ATP synthase F1 sector subunit beta</fullName>
    </alternativeName>
    <alternativeName>
        <fullName evidence="1">F-ATPase subunit beta</fullName>
    </alternativeName>
</protein>
<evidence type="ECO:0000255" key="1">
    <source>
        <dbReference type="HAMAP-Rule" id="MF_01347"/>
    </source>
</evidence>
<accession>B7KGV4</accession>
<gene>
    <name evidence="1" type="primary">atpD</name>
    <name evidence="1" type="synonym">atpB</name>
    <name type="ordered locus">PCC7424_5090</name>
</gene>
<feature type="chain" id="PRO_1000143492" description="ATP synthase subunit beta">
    <location>
        <begin position="1"/>
        <end position="482"/>
    </location>
</feature>
<feature type="binding site" evidence="1">
    <location>
        <begin position="161"/>
        <end position="168"/>
    </location>
    <ligand>
        <name>ATP</name>
        <dbReference type="ChEBI" id="CHEBI:30616"/>
    </ligand>
</feature>
<dbReference type="EC" id="7.1.2.2" evidence="1"/>
<dbReference type="EMBL" id="CP001291">
    <property type="protein sequence ID" value="ACK73441.1"/>
    <property type="molecule type" value="Genomic_DNA"/>
</dbReference>
<dbReference type="RefSeq" id="WP_015957021.1">
    <property type="nucleotide sequence ID" value="NC_011729.1"/>
</dbReference>
<dbReference type="SMR" id="B7KGV4"/>
<dbReference type="STRING" id="65393.PCC7424_5090"/>
<dbReference type="KEGG" id="cyc:PCC7424_5090"/>
<dbReference type="eggNOG" id="COG0055">
    <property type="taxonomic scope" value="Bacteria"/>
</dbReference>
<dbReference type="HOGENOM" id="CLU_022398_0_2_3"/>
<dbReference type="OrthoDB" id="9801639at2"/>
<dbReference type="Proteomes" id="UP000002384">
    <property type="component" value="Chromosome"/>
</dbReference>
<dbReference type="GO" id="GO:0031676">
    <property type="term" value="C:plasma membrane-derived thylakoid membrane"/>
    <property type="evidence" value="ECO:0007669"/>
    <property type="project" value="UniProtKB-SubCell"/>
</dbReference>
<dbReference type="GO" id="GO:0045259">
    <property type="term" value="C:proton-transporting ATP synthase complex"/>
    <property type="evidence" value="ECO:0007669"/>
    <property type="project" value="UniProtKB-KW"/>
</dbReference>
<dbReference type="GO" id="GO:0005524">
    <property type="term" value="F:ATP binding"/>
    <property type="evidence" value="ECO:0007669"/>
    <property type="project" value="UniProtKB-UniRule"/>
</dbReference>
<dbReference type="GO" id="GO:0016887">
    <property type="term" value="F:ATP hydrolysis activity"/>
    <property type="evidence" value="ECO:0007669"/>
    <property type="project" value="InterPro"/>
</dbReference>
<dbReference type="GO" id="GO:0046933">
    <property type="term" value="F:proton-transporting ATP synthase activity, rotational mechanism"/>
    <property type="evidence" value="ECO:0007669"/>
    <property type="project" value="UniProtKB-UniRule"/>
</dbReference>
<dbReference type="CDD" id="cd18110">
    <property type="entry name" value="ATP-synt_F1_beta_C"/>
    <property type="match status" value="1"/>
</dbReference>
<dbReference type="CDD" id="cd18115">
    <property type="entry name" value="ATP-synt_F1_beta_N"/>
    <property type="match status" value="1"/>
</dbReference>
<dbReference type="CDD" id="cd01133">
    <property type="entry name" value="F1-ATPase_beta_CD"/>
    <property type="match status" value="1"/>
</dbReference>
<dbReference type="FunFam" id="1.10.1140.10:FF:000001">
    <property type="entry name" value="ATP synthase subunit beta"/>
    <property type="match status" value="1"/>
</dbReference>
<dbReference type="FunFam" id="3.40.50.300:FF:000004">
    <property type="entry name" value="ATP synthase subunit beta"/>
    <property type="match status" value="1"/>
</dbReference>
<dbReference type="FunFam" id="2.40.10.170:FF:000002">
    <property type="entry name" value="ATP synthase subunit beta, chloroplastic"/>
    <property type="match status" value="1"/>
</dbReference>
<dbReference type="Gene3D" id="2.40.10.170">
    <property type="match status" value="1"/>
</dbReference>
<dbReference type="Gene3D" id="1.10.1140.10">
    <property type="entry name" value="Bovine Mitochondrial F1-atpase, Atp Synthase Beta Chain, Chain D, domain 3"/>
    <property type="match status" value="1"/>
</dbReference>
<dbReference type="Gene3D" id="3.40.50.300">
    <property type="entry name" value="P-loop containing nucleotide triphosphate hydrolases"/>
    <property type="match status" value="1"/>
</dbReference>
<dbReference type="HAMAP" id="MF_01347">
    <property type="entry name" value="ATP_synth_beta_bact"/>
    <property type="match status" value="1"/>
</dbReference>
<dbReference type="InterPro" id="IPR003593">
    <property type="entry name" value="AAA+_ATPase"/>
</dbReference>
<dbReference type="InterPro" id="IPR055190">
    <property type="entry name" value="ATP-synt_VA_C"/>
</dbReference>
<dbReference type="InterPro" id="IPR005722">
    <property type="entry name" value="ATP_synth_F1_bsu"/>
</dbReference>
<dbReference type="InterPro" id="IPR020003">
    <property type="entry name" value="ATPase_a/bsu_AS"/>
</dbReference>
<dbReference type="InterPro" id="IPR050053">
    <property type="entry name" value="ATPase_alpha/beta_chains"/>
</dbReference>
<dbReference type="InterPro" id="IPR004100">
    <property type="entry name" value="ATPase_F1/V1/A1_a/bsu_N"/>
</dbReference>
<dbReference type="InterPro" id="IPR036121">
    <property type="entry name" value="ATPase_F1/V1/A1_a/bsu_N_sf"/>
</dbReference>
<dbReference type="InterPro" id="IPR000194">
    <property type="entry name" value="ATPase_F1/V1/A1_a/bsu_nucl-bd"/>
</dbReference>
<dbReference type="InterPro" id="IPR024034">
    <property type="entry name" value="ATPase_F1/V1_b/a_C"/>
</dbReference>
<dbReference type="InterPro" id="IPR027417">
    <property type="entry name" value="P-loop_NTPase"/>
</dbReference>
<dbReference type="NCBIfam" id="TIGR01039">
    <property type="entry name" value="atpD"/>
    <property type="match status" value="1"/>
</dbReference>
<dbReference type="PANTHER" id="PTHR15184">
    <property type="entry name" value="ATP SYNTHASE"/>
    <property type="match status" value="1"/>
</dbReference>
<dbReference type="PANTHER" id="PTHR15184:SF71">
    <property type="entry name" value="ATP SYNTHASE SUBUNIT BETA, MITOCHONDRIAL"/>
    <property type="match status" value="1"/>
</dbReference>
<dbReference type="Pfam" id="PF00006">
    <property type="entry name" value="ATP-synt_ab"/>
    <property type="match status" value="1"/>
</dbReference>
<dbReference type="Pfam" id="PF02874">
    <property type="entry name" value="ATP-synt_ab_N"/>
    <property type="match status" value="1"/>
</dbReference>
<dbReference type="Pfam" id="PF22919">
    <property type="entry name" value="ATP-synt_VA_C"/>
    <property type="match status" value="1"/>
</dbReference>
<dbReference type="SMART" id="SM00382">
    <property type="entry name" value="AAA"/>
    <property type="match status" value="1"/>
</dbReference>
<dbReference type="SUPFAM" id="SSF47917">
    <property type="entry name" value="C-terminal domain of alpha and beta subunits of F1 ATP synthase"/>
    <property type="match status" value="1"/>
</dbReference>
<dbReference type="SUPFAM" id="SSF50615">
    <property type="entry name" value="N-terminal domain of alpha and beta subunits of F1 ATP synthase"/>
    <property type="match status" value="1"/>
</dbReference>
<dbReference type="SUPFAM" id="SSF52540">
    <property type="entry name" value="P-loop containing nucleoside triphosphate hydrolases"/>
    <property type="match status" value="1"/>
</dbReference>
<dbReference type="PROSITE" id="PS00152">
    <property type="entry name" value="ATPASE_ALPHA_BETA"/>
    <property type="match status" value="1"/>
</dbReference>
<comment type="function">
    <text evidence="1">Produces ATP from ADP in the presence of a proton gradient across the membrane. The catalytic sites are hosted primarily by the beta subunits.</text>
</comment>
<comment type="catalytic activity">
    <reaction evidence="1">
        <text>ATP + H2O + 4 H(+)(in) = ADP + phosphate + 5 H(+)(out)</text>
        <dbReference type="Rhea" id="RHEA:57720"/>
        <dbReference type="ChEBI" id="CHEBI:15377"/>
        <dbReference type="ChEBI" id="CHEBI:15378"/>
        <dbReference type="ChEBI" id="CHEBI:30616"/>
        <dbReference type="ChEBI" id="CHEBI:43474"/>
        <dbReference type="ChEBI" id="CHEBI:456216"/>
        <dbReference type="EC" id="7.1.2.2"/>
    </reaction>
</comment>
<comment type="subunit">
    <text evidence="1">F-type ATPases have 2 components, CF(1) - the catalytic core - and CF(0) - the membrane proton channel. CF(1) has five subunits: alpha(3), beta(3), gamma(1), delta(1), epsilon(1). CF(0) has four main subunits: a(1), b(1), b'(1) and c(9-12).</text>
</comment>
<comment type="subcellular location">
    <subcellularLocation>
        <location evidence="1">Cellular thylakoid membrane</location>
        <topology evidence="1">Peripheral membrane protein</topology>
    </subcellularLocation>
</comment>
<comment type="similarity">
    <text evidence="1">Belongs to the ATPase alpha/beta chains family.</text>
</comment>
<proteinExistence type="inferred from homology"/>
<sequence length="482" mass="52076">MVATTEQTVGKITQVIGPVVDAEFPSGKLPRIYNALTVKGTNPAGAEVNITCEVQQLLGDNQVRAVAMSSTDGLVRGMEIIDTGAPISVPVGKSTLGRIFNVLGEPVDEKGSVNVNETFPIHRPAPKLTDLETKPKVFETGIKVIDLLTPYRQGGKIGLFGGAGVGKTVIMMELINNIAIQHGGVSVFGGVGERTREGNDLYNEMIESKVINPDNPEDSKIALVYGQMNEPPGARMRVGLSALTMAEYFRDVNKQDVLLFIDNIFRFVQAGSEVSALLGRMPSAVGYQPTLGTDVGDLQERITSTKEGSITSIQAVYVPADDLTDPAPATTFAHLDGTTVLSRGLASKGIYPAVDPLDSTSTMLQPNIVGQEHYKTARAVQSTLQRYKELQDIIAILGLDELSEEDRQTVDRARKIERFLSQPFFVAEVFTGSPGKYVTLEDTIKGFNMILNGELDDLPEQAFYMVGNIDEAIAKAEKLKKG</sequence>
<reference key="1">
    <citation type="journal article" date="2011" name="MBio">
        <title>Novel metabolic attributes of the genus Cyanothece, comprising a group of unicellular nitrogen-fixing Cyanobacteria.</title>
        <authorList>
            <person name="Bandyopadhyay A."/>
            <person name="Elvitigala T."/>
            <person name="Welsh E."/>
            <person name="Stockel J."/>
            <person name="Liberton M."/>
            <person name="Min H."/>
            <person name="Sherman L.A."/>
            <person name="Pakrasi H.B."/>
        </authorList>
    </citation>
    <scope>NUCLEOTIDE SEQUENCE [LARGE SCALE GENOMIC DNA]</scope>
    <source>
        <strain>PCC 7424</strain>
    </source>
</reference>
<keyword id="KW-0066">ATP synthesis</keyword>
<keyword id="KW-0067">ATP-binding</keyword>
<keyword id="KW-0139">CF(1)</keyword>
<keyword id="KW-0375">Hydrogen ion transport</keyword>
<keyword id="KW-0406">Ion transport</keyword>
<keyword id="KW-0472">Membrane</keyword>
<keyword id="KW-0547">Nucleotide-binding</keyword>
<keyword id="KW-1185">Reference proteome</keyword>
<keyword id="KW-0793">Thylakoid</keyword>
<keyword id="KW-1278">Translocase</keyword>
<keyword id="KW-0813">Transport</keyword>
<name>ATPB_GLOC7</name>